<name>PCP_MYCTA</name>
<gene>
    <name evidence="1" type="primary">pcp</name>
    <name type="ordered locus">MRA_0328</name>
</gene>
<sequence length="222" mass="23193">MSKVLVTGFGPYGVTPVNPAQLTAEELDGRTIAGATVISRIVPNTFFESIAAAQQAIAEIEPALVIMLGEYPGRSMITVERLAQNVNDCGRYGLADCAGRVLVGEPTDPAGPVAYHATVPVRAMVLAMRKAGVPADVSDAAGTFVCNHLMYGVLHHLAQKGLPVRAGWIHLPCLPSVAALDHNLGVPSMSVQTAVAGVTAGIEAAIRQSADIREPIPSRLQI</sequence>
<keyword id="KW-0963">Cytoplasm</keyword>
<keyword id="KW-0378">Hydrolase</keyword>
<keyword id="KW-0645">Protease</keyword>
<keyword id="KW-1185">Reference proteome</keyword>
<keyword id="KW-0788">Thiol protease</keyword>
<reference key="1">
    <citation type="journal article" date="2008" name="PLoS ONE">
        <title>Genetic basis of virulence attenuation revealed by comparative genomic analysis of Mycobacterium tuberculosis strain H37Ra versus H37Rv.</title>
        <authorList>
            <person name="Zheng H."/>
            <person name="Lu L."/>
            <person name="Wang B."/>
            <person name="Pu S."/>
            <person name="Zhang X."/>
            <person name="Zhu G."/>
            <person name="Shi W."/>
            <person name="Zhang L."/>
            <person name="Wang H."/>
            <person name="Wang S."/>
            <person name="Zhao G."/>
            <person name="Zhang Y."/>
        </authorList>
    </citation>
    <scope>NUCLEOTIDE SEQUENCE [LARGE SCALE GENOMIC DNA]</scope>
    <source>
        <strain>ATCC 25177 / H37Ra</strain>
    </source>
</reference>
<evidence type="ECO:0000255" key="1">
    <source>
        <dbReference type="HAMAP-Rule" id="MF_00417"/>
    </source>
</evidence>
<dbReference type="EC" id="3.4.19.3" evidence="1"/>
<dbReference type="EMBL" id="CP000611">
    <property type="protein sequence ID" value="ABQ72046.1"/>
    <property type="molecule type" value="Genomic_DNA"/>
</dbReference>
<dbReference type="RefSeq" id="WP_003401632.1">
    <property type="nucleotide sequence ID" value="NZ_CP016972.1"/>
</dbReference>
<dbReference type="SMR" id="A5TZ46"/>
<dbReference type="MEROPS" id="C15.001"/>
<dbReference type="GeneID" id="45424287"/>
<dbReference type="KEGG" id="mra:MRA_0328"/>
<dbReference type="eggNOG" id="COG2039">
    <property type="taxonomic scope" value="Bacteria"/>
</dbReference>
<dbReference type="HOGENOM" id="CLU_043960_4_3_11"/>
<dbReference type="Proteomes" id="UP000001988">
    <property type="component" value="Chromosome"/>
</dbReference>
<dbReference type="GO" id="GO:0005829">
    <property type="term" value="C:cytosol"/>
    <property type="evidence" value="ECO:0007669"/>
    <property type="project" value="InterPro"/>
</dbReference>
<dbReference type="GO" id="GO:0016920">
    <property type="term" value="F:pyroglutamyl-peptidase activity"/>
    <property type="evidence" value="ECO:0007669"/>
    <property type="project" value="UniProtKB-UniRule"/>
</dbReference>
<dbReference type="GO" id="GO:0006508">
    <property type="term" value="P:proteolysis"/>
    <property type="evidence" value="ECO:0007669"/>
    <property type="project" value="UniProtKB-KW"/>
</dbReference>
<dbReference type="CDD" id="cd00501">
    <property type="entry name" value="Peptidase_C15"/>
    <property type="match status" value="1"/>
</dbReference>
<dbReference type="Gene3D" id="3.40.630.20">
    <property type="entry name" value="Peptidase C15, pyroglutamyl peptidase I-like"/>
    <property type="match status" value="1"/>
</dbReference>
<dbReference type="HAMAP" id="MF_00417">
    <property type="entry name" value="Pyrrolid_peptidase"/>
    <property type="match status" value="1"/>
</dbReference>
<dbReference type="InterPro" id="IPR000816">
    <property type="entry name" value="Peptidase_C15"/>
</dbReference>
<dbReference type="InterPro" id="IPR016125">
    <property type="entry name" value="Peptidase_C15-like"/>
</dbReference>
<dbReference type="InterPro" id="IPR036440">
    <property type="entry name" value="Peptidase_C15-like_sf"/>
</dbReference>
<dbReference type="InterPro" id="IPR029762">
    <property type="entry name" value="PGP-I_bact-type"/>
</dbReference>
<dbReference type="InterPro" id="IPR033694">
    <property type="entry name" value="PGPEP1_Cys_AS"/>
</dbReference>
<dbReference type="InterPro" id="IPR033693">
    <property type="entry name" value="PGPEP1_Glu_AS"/>
</dbReference>
<dbReference type="NCBIfam" id="NF009674">
    <property type="entry name" value="PRK13195.1"/>
    <property type="match status" value="1"/>
</dbReference>
<dbReference type="NCBIfam" id="NF009676">
    <property type="entry name" value="PRK13197.1"/>
    <property type="match status" value="1"/>
</dbReference>
<dbReference type="NCBIfam" id="TIGR00504">
    <property type="entry name" value="pyro_pdase"/>
    <property type="match status" value="1"/>
</dbReference>
<dbReference type="PANTHER" id="PTHR23402">
    <property type="entry name" value="PROTEASE FAMILY C15 PYROGLUTAMYL-PEPTIDASE I-RELATED"/>
    <property type="match status" value="1"/>
</dbReference>
<dbReference type="PANTHER" id="PTHR23402:SF1">
    <property type="entry name" value="PYROGLUTAMYL-PEPTIDASE I"/>
    <property type="match status" value="1"/>
</dbReference>
<dbReference type="Pfam" id="PF01470">
    <property type="entry name" value="Peptidase_C15"/>
    <property type="match status" value="1"/>
</dbReference>
<dbReference type="PIRSF" id="PIRSF015592">
    <property type="entry name" value="Prld-crbxl_pptds"/>
    <property type="match status" value="1"/>
</dbReference>
<dbReference type="PRINTS" id="PR00706">
    <property type="entry name" value="PYROGLUPTASE"/>
</dbReference>
<dbReference type="SUPFAM" id="SSF53182">
    <property type="entry name" value="Pyrrolidone carboxyl peptidase (pyroglutamate aminopeptidase)"/>
    <property type="match status" value="1"/>
</dbReference>
<dbReference type="PROSITE" id="PS01334">
    <property type="entry name" value="PYRASE_CYS"/>
    <property type="match status" value="1"/>
</dbReference>
<dbReference type="PROSITE" id="PS01333">
    <property type="entry name" value="PYRASE_GLU"/>
    <property type="match status" value="1"/>
</dbReference>
<protein>
    <recommendedName>
        <fullName evidence="1">Pyrrolidone-carboxylate peptidase</fullName>
        <ecNumber evidence="1">3.4.19.3</ecNumber>
    </recommendedName>
    <alternativeName>
        <fullName evidence="1">5-oxoprolyl-peptidase</fullName>
    </alternativeName>
    <alternativeName>
        <fullName evidence="1">Pyroglutamyl-peptidase I</fullName>
        <shortName evidence="1">PGP-I</shortName>
        <shortName evidence="1">Pyrase</shortName>
    </alternativeName>
</protein>
<feature type="chain" id="PRO_1000050134" description="Pyrrolidone-carboxylate peptidase">
    <location>
        <begin position="1"/>
        <end position="222"/>
    </location>
</feature>
<feature type="active site" evidence="1">
    <location>
        <position position="80"/>
    </location>
</feature>
<feature type="active site" evidence="1">
    <location>
        <position position="146"/>
    </location>
</feature>
<feature type="active site" evidence="1">
    <location>
        <position position="170"/>
    </location>
</feature>
<accession>A5TZ46</accession>
<proteinExistence type="inferred from homology"/>
<organism>
    <name type="scientific">Mycobacterium tuberculosis (strain ATCC 25177 / H37Ra)</name>
    <dbReference type="NCBI Taxonomy" id="419947"/>
    <lineage>
        <taxon>Bacteria</taxon>
        <taxon>Bacillati</taxon>
        <taxon>Actinomycetota</taxon>
        <taxon>Actinomycetes</taxon>
        <taxon>Mycobacteriales</taxon>
        <taxon>Mycobacteriaceae</taxon>
        <taxon>Mycobacterium</taxon>
        <taxon>Mycobacterium tuberculosis complex</taxon>
    </lineage>
</organism>
<comment type="function">
    <text evidence="1">Removes 5-oxoproline from various penultimate amino acid residues except L-proline.</text>
</comment>
<comment type="catalytic activity">
    <reaction evidence="1">
        <text>Release of an N-terminal pyroglutamyl group from a polypeptide, the second amino acid generally not being Pro.</text>
        <dbReference type="EC" id="3.4.19.3"/>
    </reaction>
</comment>
<comment type="subunit">
    <text evidence="1">Homotetramer.</text>
</comment>
<comment type="subcellular location">
    <subcellularLocation>
        <location evidence="1">Cytoplasm</location>
    </subcellularLocation>
</comment>
<comment type="similarity">
    <text evidence="1">Belongs to the peptidase C15 family.</text>
</comment>